<protein>
    <recommendedName>
        <fullName>Colipase</fullName>
    </recommendedName>
</protein>
<gene>
    <name type="primary">clps</name>
</gene>
<organism>
    <name type="scientific">Xenopus tropicalis</name>
    <name type="common">Western clawed frog</name>
    <name type="synonym">Silurana tropicalis</name>
    <dbReference type="NCBI Taxonomy" id="8364"/>
    <lineage>
        <taxon>Eukaryota</taxon>
        <taxon>Metazoa</taxon>
        <taxon>Chordata</taxon>
        <taxon>Craniata</taxon>
        <taxon>Vertebrata</taxon>
        <taxon>Euteleostomi</taxon>
        <taxon>Amphibia</taxon>
        <taxon>Batrachia</taxon>
        <taxon>Anura</taxon>
        <taxon>Pipoidea</taxon>
        <taxon>Pipidae</taxon>
        <taxon>Xenopodinae</taxon>
        <taxon>Xenopus</taxon>
        <taxon>Silurana</taxon>
    </lineage>
</organism>
<dbReference type="EMBL" id="BC156015">
    <property type="protein sequence ID" value="AAI56016.1"/>
    <property type="molecule type" value="mRNA"/>
</dbReference>
<dbReference type="RefSeq" id="NP_001107327.1">
    <property type="nucleotide sequence ID" value="NM_001113855.1"/>
</dbReference>
<dbReference type="SMR" id="A9JSD6"/>
<dbReference type="FunCoup" id="A9JSD6">
    <property type="interactions" value="148"/>
</dbReference>
<dbReference type="PaxDb" id="8364-ENSXETP00000062838"/>
<dbReference type="GeneID" id="100135140"/>
<dbReference type="KEGG" id="xtr:100135140"/>
<dbReference type="AGR" id="Xenbase:XB-GENE-982642"/>
<dbReference type="CTD" id="1208"/>
<dbReference type="Xenbase" id="XB-GENE-982642">
    <property type="gene designation" value="clps"/>
</dbReference>
<dbReference type="eggNOG" id="ENOG502S4NY">
    <property type="taxonomic scope" value="Eukaryota"/>
</dbReference>
<dbReference type="HOGENOM" id="CLU_165591_0_0_1"/>
<dbReference type="InParanoid" id="A9JSD6"/>
<dbReference type="OMA" id="CSPKTLY"/>
<dbReference type="OrthoDB" id="9826993at2759"/>
<dbReference type="PhylomeDB" id="A9JSD6"/>
<dbReference type="TreeFam" id="TF336178"/>
<dbReference type="Reactome" id="R-XTR-192456">
    <property type="pathway name" value="Digestion of dietary lipid"/>
</dbReference>
<dbReference type="Reactome" id="R-XTR-975634">
    <property type="pathway name" value="Retinoid metabolism and transport"/>
</dbReference>
<dbReference type="Proteomes" id="UP000008143">
    <property type="component" value="Chromosome 2"/>
</dbReference>
<dbReference type="GO" id="GO:0005576">
    <property type="term" value="C:extracellular region"/>
    <property type="evidence" value="ECO:0007669"/>
    <property type="project" value="UniProtKB-SubCell"/>
</dbReference>
<dbReference type="GO" id="GO:0008047">
    <property type="term" value="F:enzyme activator activity"/>
    <property type="evidence" value="ECO:0007669"/>
    <property type="project" value="InterPro"/>
</dbReference>
<dbReference type="GO" id="GO:0035473">
    <property type="term" value="F:lipase binding"/>
    <property type="evidence" value="ECO:0007669"/>
    <property type="project" value="InterPro"/>
</dbReference>
<dbReference type="GO" id="GO:0007586">
    <property type="term" value="P:digestion"/>
    <property type="evidence" value="ECO:0007669"/>
    <property type="project" value="UniProtKB-KW"/>
</dbReference>
<dbReference type="GO" id="GO:0016042">
    <property type="term" value="P:lipid catabolic process"/>
    <property type="evidence" value="ECO:0007669"/>
    <property type="project" value="UniProtKB-KW"/>
</dbReference>
<dbReference type="CDD" id="cd23011">
    <property type="entry name" value="CLPS"/>
    <property type="match status" value="1"/>
</dbReference>
<dbReference type="Gene3D" id="2.10.80.10">
    <property type="entry name" value="Lipase, subunit A"/>
    <property type="match status" value="1"/>
</dbReference>
<dbReference type="InterPro" id="IPR047576">
    <property type="entry name" value="CLPS_chr"/>
</dbReference>
<dbReference type="InterPro" id="IPR001981">
    <property type="entry name" value="Colipase"/>
</dbReference>
<dbReference type="InterPro" id="IPR017914">
    <property type="entry name" value="Colipase_C"/>
</dbReference>
<dbReference type="InterPro" id="IPR017915">
    <property type="entry name" value="Colipase_CS"/>
</dbReference>
<dbReference type="InterPro" id="IPR017913">
    <property type="entry name" value="Colipase_N"/>
</dbReference>
<dbReference type="PANTHER" id="PTHR10041">
    <property type="entry name" value="COLIPASE"/>
    <property type="match status" value="1"/>
</dbReference>
<dbReference type="PANTHER" id="PTHR10041:SF9">
    <property type="entry name" value="COLIPASE"/>
    <property type="match status" value="1"/>
</dbReference>
<dbReference type="Pfam" id="PF01114">
    <property type="entry name" value="Colipase"/>
    <property type="match status" value="1"/>
</dbReference>
<dbReference type="Pfam" id="PF02740">
    <property type="entry name" value="Colipase_C"/>
    <property type="match status" value="1"/>
</dbReference>
<dbReference type="PRINTS" id="PR00128">
    <property type="entry name" value="COLIPASE"/>
</dbReference>
<dbReference type="SMART" id="SM00023">
    <property type="entry name" value="COLIPASE"/>
    <property type="match status" value="1"/>
</dbReference>
<dbReference type="SUPFAM" id="SSF57190">
    <property type="entry name" value="Colipase-like"/>
    <property type="match status" value="2"/>
</dbReference>
<dbReference type="PROSITE" id="PS00121">
    <property type="entry name" value="COLIPASE_1"/>
    <property type="match status" value="1"/>
</dbReference>
<dbReference type="PROSITE" id="PS51342">
    <property type="entry name" value="COLIPASE_2"/>
    <property type="match status" value="1"/>
</dbReference>
<proteinExistence type="inferred from homology"/>
<keyword id="KW-0222">Digestion</keyword>
<keyword id="KW-1015">Disulfide bond</keyword>
<keyword id="KW-0442">Lipid degradation</keyword>
<keyword id="KW-0443">Lipid metabolism</keyword>
<keyword id="KW-1185">Reference proteome</keyword>
<keyword id="KW-0964">Secreted</keyword>
<keyword id="KW-0732">Signal</keyword>
<comment type="function">
    <text evidence="2">Colipase is a cofactor of pancreatic lipase. It allows the lipase to anchor itself to the lipid-water interface. Without colipase the enzyme is washed off by bile salts, which have an inhibitory effect on the lipase.</text>
</comment>
<comment type="subunit">
    <text evidence="2">Forms a 1:1 stoichiometric complex with pancreatic lipase.</text>
</comment>
<comment type="subcellular location">
    <subcellularLocation>
        <location evidence="2">Secreted</location>
    </subcellularLocation>
</comment>
<comment type="similarity">
    <text evidence="2">Belongs to the colipase family.</text>
</comment>
<reference key="1">
    <citation type="submission" date="2007-12" db="EMBL/GenBank/DDBJ databases">
        <authorList>
            <consortium name="NIH - Xenopus Gene Collection (XGC) project"/>
        </authorList>
    </citation>
    <scope>NUCLEOTIDE SEQUENCE [LARGE SCALE MRNA]</scope>
    <source>
        <strain>Nigerian</strain>
        <tissue>Pancreas</tissue>
    </source>
</reference>
<name>COL_XENTR</name>
<sequence length="117" mass="12717">MNIFNILLPIVVLLLVFGLTAAIPDEKGLIFNLDNGELCLQTAQCKSGCCHRNSGVSLARCAPKAAETQKCSPLHIYGTYYFCPCESGLTCEVDRSIVGSITNTDYGYCEDQNNTTI</sequence>
<accession>A9JSD6</accession>
<evidence type="ECO:0000255" key="1"/>
<evidence type="ECO:0000255" key="2">
    <source>
        <dbReference type="PROSITE-ProRule" id="PRU00674"/>
    </source>
</evidence>
<feature type="signal peptide" evidence="1">
    <location>
        <begin position="1"/>
        <end position="22"/>
    </location>
</feature>
<feature type="chain" id="PRO_0000337012" description="Colipase">
    <location>
        <begin position="23"/>
        <end position="117"/>
    </location>
</feature>
<feature type="disulfide bond" evidence="2">
    <location>
        <begin position="39"/>
        <end position="50"/>
    </location>
</feature>
<feature type="disulfide bond" evidence="2">
    <location>
        <begin position="45"/>
        <end position="61"/>
    </location>
</feature>
<feature type="disulfide bond" evidence="2">
    <location>
        <begin position="49"/>
        <end position="83"/>
    </location>
</feature>
<feature type="disulfide bond" evidence="2">
    <location>
        <begin position="71"/>
        <end position="91"/>
    </location>
</feature>
<feature type="disulfide bond" evidence="2">
    <location>
        <begin position="85"/>
        <end position="109"/>
    </location>
</feature>